<accession>Q15TQ4</accession>
<reference key="1">
    <citation type="submission" date="2006-06" db="EMBL/GenBank/DDBJ databases">
        <title>Complete sequence of Pseudoalteromonas atlantica T6c.</title>
        <authorList>
            <consortium name="US DOE Joint Genome Institute"/>
            <person name="Copeland A."/>
            <person name="Lucas S."/>
            <person name="Lapidus A."/>
            <person name="Barry K."/>
            <person name="Detter J.C."/>
            <person name="Glavina del Rio T."/>
            <person name="Hammon N."/>
            <person name="Israni S."/>
            <person name="Dalin E."/>
            <person name="Tice H."/>
            <person name="Pitluck S."/>
            <person name="Saunders E."/>
            <person name="Brettin T."/>
            <person name="Bruce D."/>
            <person name="Han C."/>
            <person name="Tapia R."/>
            <person name="Gilna P."/>
            <person name="Schmutz J."/>
            <person name="Larimer F."/>
            <person name="Land M."/>
            <person name="Hauser L."/>
            <person name="Kyrpides N."/>
            <person name="Kim E."/>
            <person name="Karls A.C."/>
            <person name="Bartlett D."/>
            <person name="Higgins B.P."/>
            <person name="Richardson P."/>
        </authorList>
    </citation>
    <scope>NUCLEOTIDE SEQUENCE [LARGE SCALE GENOMIC DNA]</scope>
    <source>
        <strain>T6c / ATCC BAA-1087</strain>
    </source>
</reference>
<sequence length="267" mass="28317">MNKIAIFGANGRMGRVLIEAIDQSQNATLNAAFVRASSSMMGVDVGELAGIGQRGLTVTDANSADFSQIDIVIDFTLPEALEANLALCVQQKKPVVIGTTGLNQQQKDALQRASQHIPIVFAANYSIGVNLLLNLARQTARVMGGTADIEIIEGHHRFKKDAPSGTAVAIGEVIADELGRDLSTCAVYGREGDTGERDQQTIGFATVRAGDIVGEHTALFADIGERIELTHKASSRLTFANGAVKAAVWLKNKSPGLYDMQDVLGLA</sequence>
<protein>
    <recommendedName>
        <fullName evidence="1">4-hydroxy-tetrahydrodipicolinate reductase</fullName>
        <shortName evidence="1">HTPA reductase</shortName>
        <ecNumber evidence="1">1.17.1.8</ecNumber>
    </recommendedName>
</protein>
<evidence type="ECO:0000255" key="1">
    <source>
        <dbReference type="HAMAP-Rule" id="MF_00102"/>
    </source>
</evidence>
<evidence type="ECO:0000305" key="2"/>
<dbReference type="EC" id="1.17.1.8" evidence="1"/>
<dbReference type="EMBL" id="CP000388">
    <property type="protein sequence ID" value="ABG40734.1"/>
    <property type="molecule type" value="Genomic_DNA"/>
</dbReference>
<dbReference type="RefSeq" id="WP_011575017.1">
    <property type="nucleotide sequence ID" value="NC_008228.1"/>
</dbReference>
<dbReference type="SMR" id="Q15TQ4"/>
<dbReference type="STRING" id="342610.Patl_2216"/>
<dbReference type="KEGG" id="pat:Patl_2216"/>
<dbReference type="eggNOG" id="COG0289">
    <property type="taxonomic scope" value="Bacteria"/>
</dbReference>
<dbReference type="HOGENOM" id="CLU_047479_2_1_6"/>
<dbReference type="OrthoDB" id="9790352at2"/>
<dbReference type="UniPathway" id="UPA00034">
    <property type="reaction ID" value="UER00018"/>
</dbReference>
<dbReference type="Proteomes" id="UP000001981">
    <property type="component" value="Chromosome"/>
</dbReference>
<dbReference type="GO" id="GO:0005829">
    <property type="term" value="C:cytosol"/>
    <property type="evidence" value="ECO:0007669"/>
    <property type="project" value="TreeGrafter"/>
</dbReference>
<dbReference type="GO" id="GO:0008839">
    <property type="term" value="F:4-hydroxy-tetrahydrodipicolinate reductase"/>
    <property type="evidence" value="ECO:0007669"/>
    <property type="project" value="UniProtKB-EC"/>
</dbReference>
<dbReference type="GO" id="GO:0051287">
    <property type="term" value="F:NAD binding"/>
    <property type="evidence" value="ECO:0007669"/>
    <property type="project" value="UniProtKB-UniRule"/>
</dbReference>
<dbReference type="GO" id="GO:0050661">
    <property type="term" value="F:NADP binding"/>
    <property type="evidence" value="ECO:0007669"/>
    <property type="project" value="UniProtKB-UniRule"/>
</dbReference>
<dbReference type="GO" id="GO:0016726">
    <property type="term" value="F:oxidoreductase activity, acting on CH or CH2 groups, NAD or NADP as acceptor"/>
    <property type="evidence" value="ECO:0007669"/>
    <property type="project" value="UniProtKB-UniRule"/>
</dbReference>
<dbReference type="GO" id="GO:0019877">
    <property type="term" value="P:diaminopimelate biosynthetic process"/>
    <property type="evidence" value="ECO:0007669"/>
    <property type="project" value="UniProtKB-UniRule"/>
</dbReference>
<dbReference type="GO" id="GO:0009089">
    <property type="term" value="P:lysine biosynthetic process via diaminopimelate"/>
    <property type="evidence" value="ECO:0007669"/>
    <property type="project" value="UniProtKB-UniRule"/>
</dbReference>
<dbReference type="CDD" id="cd02274">
    <property type="entry name" value="DHDPR_N"/>
    <property type="match status" value="1"/>
</dbReference>
<dbReference type="FunFam" id="3.30.360.10:FF:000004">
    <property type="entry name" value="4-hydroxy-tetrahydrodipicolinate reductase"/>
    <property type="match status" value="1"/>
</dbReference>
<dbReference type="FunFam" id="3.40.50.720:FF:000048">
    <property type="entry name" value="4-hydroxy-tetrahydrodipicolinate reductase"/>
    <property type="match status" value="1"/>
</dbReference>
<dbReference type="Gene3D" id="3.30.360.10">
    <property type="entry name" value="Dihydrodipicolinate Reductase, domain 2"/>
    <property type="match status" value="1"/>
</dbReference>
<dbReference type="Gene3D" id="3.40.50.720">
    <property type="entry name" value="NAD(P)-binding Rossmann-like Domain"/>
    <property type="match status" value="1"/>
</dbReference>
<dbReference type="HAMAP" id="MF_00102">
    <property type="entry name" value="DapB"/>
    <property type="match status" value="1"/>
</dbReference>
<dbReference type="InterPro" id="IPR022663">
    <property type="entry name" value="DapB_C"/>
</dbReference>
<dbReference type="InterPro" id="IPR000846">
    <property type="entry name" value="DapB_N"/>
</dbReference>
<dbReference type="InterPro" id="IPR022664">
    <property type="entry name" value="DapB_N_CS"/>
</dbReference>
<dbReference type="InterPro" id="IPR023940">
    <property type="entry name" value="DHDPR_bac"/>
</dbReference>
<dbReference type="InterPro" id="IPR036291">
    <property type="entry name" value="NAD(P)-bd_dom_sf"/>
</dbReference>
<dbReference type="NCBIfam" id="TIGR00036">
    <property type="entry name" value="dapB"/>
    <property type="match status" value="1"/>
</dbReference>
<dbReference type="PANTHER" id="PTHR20836:SF0">
    <property type="entry name" value="4-HYDROXY-TETRAHYDRODIPICOLINATE REDUCTASE 1, CHLOROPLASTIC-RELATED"/>
    <property type="match status" value="1"/>
</dbReference>
<dbReference type="PANTHER" id="PTHR20836">
    <property type="entry name" value="DIHYDRODIPICOLINATE REDUCTASE"/>
    <property type="match status" value="1"/>
</dbReference>
<dbReference type="Pfam" id="PF05173">
    <property type="entry name" value="DapB_C"/>
    <property type="match status" value="1"/>
</dbReference>
<dbReference type="Pfam" id="PF01113">
    <property type="entry name" value="DapB_N"/>
    <property type="match status" value="1"/>
</dbReference>
<dbReference type="PIRSF" id="PIRSF000161">
    <property type="entry name" value="DHPR"/>
    <property type="match status" value="1"/>
</dbReference>
<dbReference type="SUPFAM" id="SSF55347">
    <property type="entry name" value="Glyceraldehyde-3-phosphate dehydrogenase-like, C-terminal domain"/>
    <property type="match status" value="1"/>
</dbReference>
<dbReference type="SUPFAM" id="SSF51735">
    <property type="entry name" value="NAD(P)-binding Rossmann-fold domains"/>
    <property type="match status" value="1"/>
</dbReference>
<dbReference type="PROSITE" id="PS01298">
    <property type="entry name" value="DAPB"/>
    <property type="match status" value="1"/>
</dbReference>
<name>DAPB_PSEA6</name>
<keyword id="KW-0028">Amino-acid biosynthesis</keyword>
<keyword id="KW-0963">Cytoplasm</keyword>
<keyword id="KW-0220">Diaminopimelate biosynthesis</keyword>
<keyword id="KW-0457">Lysine biosynthesis</keyword>
<keyword id="KW-0520">NAD</keyword>
<keyword id="KW-0521">NADP</keyword>
<keyword id="KW-0560">Oxidoreductase</keyword>
<gene>
    <name evidence="1" type="primary">dapB</name>
    <name type="ordered locus">Patl_2216</name>
</gene>
<comment type="function">
    <text evidence="1">Catalyzes the conversion of 4-hydroxy-tetrahydrodipicolinate (HTPA) to tetrahydrodipicolinate.</text>
</comment>
<comment type="catalytic activity">
    <reaction evidence="1">
        <text>(S)-2,3,4,5-tetrahydrodipicolinate + NAD(+) + H2O = (2S,4S)-4-hydroxy-2,3,4,5-tetrahydrodipicolinate + NADH + H(+)</text>
        <dbReference type="Rhea" id="RHEA:35323"/>
        <dbReference type="ChEBI" id="CHEBI:15377"/>
        <dbReference type="ChEBI" id="CHEBI:15378"/>
        <dbReference type="ChEBI" id="CHEBI:16845"/>
        <dbReference type="ChEBI" id="CHEBI:57540"/>
        <dbReference type="ChEBI" id="CHEBI:57945"/>
        <dbReference type="ChEBI" id="CHEBI:67139"/>
        <dbReference type="EC" id="1.17.1.8"/>
    </reaction>
</comment>
<comment type="catalytic activity">
    <reaction evidence="1">
        <text>(S)-2,3,4,5-tetrahydrodipicolinate + NADP(+) + H2O = (2S,4S)-4-hydroxy-2,3,4,5-tetrahydrodipicolinate + NADPH + H(+)</text>
        <dbReference type="Rhea" id="RHEA:35331"/>
        <dbReference type="ChEBI" id="CHEBI:15377"/>
        <dbReference type="ChEBI" id="CHEBI:15378"/>
        <dbReference type="ChEBI" id="CHEBI:16845"/>
        <dbReference type="ChEBI" id="CHEBI:57783"/>
        <dbReference type="ChEBI" id="CHEBI:58349"/>
        <dbReference type="ChEBI" id="CHEBI:67139"/>
        <dbReference type="EC" id="1.17.1.8"/>
    </reaction>
</comment>
<comment type="pathway">
    <text evidence="1">Amino-acid biosynthesis; L-lysine biosynthesis via DAP pathway; (S)-tetrahydrodipicolinate from L-aspartate: step 4/4.</text>
</comment>
<comment type="subcellular location">
    <subcellularLocation>
        <location evidence="1">Cytoplasm</location>
    </subcellularLocation>
</comment>
<comment type="similarity">
    <text evidence="1">Belongs to the DapB family.</text>
</comment>
<comment type="caution">
    <text evidence="2">Was originally thought to be a dihydrodipicolinate reductase (DHDPR), catalyzing the conversion of dihydrodipicolinate to tetrahydrodipicolinate. However, it was shown in E.coli that the substrate of the enzymatic reaction is not dihydrodipicolinate (DHDP) but in fact (2S,4S)-4-hydroxy-2,3,4,5-tetrahydrodipicolinic acid (HTPA), the product released by the DapA-catalyzed reaction.</text>
</comment>
<proteinExistence type="inferred from homology"/>
<organism>
    <name type="scientific">Pseudoalteromonas atlantica (strain T6c / ATCC BAA-1087)</name>
    <dbReference type="NCBI Taxonomy" id="3042615"/>
    <lineage>
        <taxon>Bacteria</taxon>
        <taxon>Pseudomonadati</taxon>
        <taxon>Pseudomonadota</taxon>
        <taxon>Gammaproteobacteria</taxon>
        <taxon>Alteromonadales</taxon>
        <taxon>Alteromonadaceae</taxon>
        <taxon>Paraglaciecola</taxon>
    </lineage>
</organism>
<feature type="chain" id="PRO_1000093990" description="4-hydroxy-tetrahydrodipicolinate reductase">
    <location>
        <begin position="1"/>
        <end position="267"/>
    </location>
</feature>
<feature type="active site" description="Proton donor/acceptor" evidence="1">
    <location>
        <position position="155"/>
    </location>
</feature>
<feature type="active site" description="Proton donor" evidence="1">
    <location>
        <position position="159"/>
    </location>
</feature>
<feature type="binding site" evidence="1">
    <location>
        <begin position="8"/>
        <end position="13"/>
    </location>
    <ligand>
        <name>NAD(+)</name>
        <dbReference type="ChEBI" id="CHEBI:57540"/>
    </ligand>
</feature>
<feature type="binding site" evidence="1">
    <location>
        <position position="35"/>
    </location>
    <ligand>
        <name>NADP(+)</name>
        <dbReference type="ChEBI" id="CHEBI:58349"/>
    </ligand>
</feature>
<feature type="binding site" evidence="1">
    <location>
        <begin position="98"/>
        <end position="100"/>
    </location>
    <ligand>
        <name>NAD(+)</name>
        <dbReference type="ChEBI" id="CHEBI:57540"/>
    </ligand>
</feature>
<feature type="binding site" evidence="1">
    <location>
        <begin position="122"/>
        <end position="125"/>
    </location>
    <ligand>
        <name>NAD(+)</name>
        <dbReference type="ChEBI" id="CHEBI:57540"/>
    </ligand>
</feature>
<feature type="binding site" evidence="1">
    <location>
        <position position="156"/>
    </location>
    <ligand>
        <name>(S)-2,3,4,5-tetrahydrodipicolinate</name>
        <dbReference type="ChEBI" id="CHEBI:16845"/>
    </ligand>
</feature>
<feature type="binding site" evidence="1">
    <location>
        <begin position="165"/>
        <end position="166"/>
    </location>
    <ligand>
        <name>(S)-2,3,4,5-tetrahydrodipicolinate</name>
        <dbReference type="ChEBI" id="CHEBI:16845"/>
    </ligand>
</feature>